<feature type="chain" id="PRO_0000390391" description="Uncharacterized membrane protein YrrS">
    <location>
        <begin position="1"/>
        <end position="233"/>
    </location>
</feature>
<feature type="transmembrane region" description="Helical" evidence="1">
    <location>
        <begin position="21"/>
        <end position="41"/>
    </location>
</feature>
<feature type="region of interest" description="Disordered" evidence="2">
    <location>
        <begin position="44"/>
        <end position="163"/>
    </location>
</feature>
<feature type="compositionally biased region" description="Basic and acidic residues" evidence="2">
    <location>
        <begin position="48"/>
        <end position="57"/>
    </location>
</feature>
<feature type="compositionally biased region" description="Basic and acidic residues" evidence="2">
    <location>
        <begin position="66"/>
        <end position="108"/>
    </location>
</feature>
<feature type="compositionally biased region" description="Basic and acidic residues" evidence="2">
    <location>
        <begin position="135"/>
        <end position="144"/>
    </location>
</feature>
<comment type="subcellular location">
    <subcellularLocation>
        <location evidence="3">Cell membrane</location>
        <topology evidence="3">Single-pass membrane protein</topology>
    </subcellularLocation>
</comment>
<evidence type="ECO:0000255" key="1"/>
<evidence type="ECO:0000256" key="2">
    <source>
        <dbReference type="SAM" id="MobiDB-lite"/>
    </source>
</evidence>
<evidence type="ECO:0000305" key="3"/>
<protein>
    <recommendedName>
        <fullName>Uncharacterized membrane protein YrrS</fullName>
    </recommendedName>
</protein>
<keyword id="KW-1003">Cell membrane</keyword>
<keyword id="KW-0472">Membrane</keyword>
<keyword id="KW-1185">Reference proteome</keyword>
<keyword id="KW-0812">Transmembrane</keyword>
<keyword id="KW-1133">Transmembrane helix</keyword>
<sequence>MSNNQSRYENRDKRRKANLVLNILIAIVSILIVVVAANLFINSPSSKDVSKDSETAQKQESPASGKTEKKSDEDIKDSKKDTSDSEKDSEKSSDSDSKKDDSSSKKDDSDSDSSSDSAGDGLKDAKVTEGGSSSDVEKTYENPDWKAVGTEQTGEHAATYDSSSQDWAEMLKAISYATGVSTDNMTVLWLGNNGSPQDAKGKILDKATGNKYQVTITWVDEKGWKPTKVEKLK</sequence>
<reference key="1">
    <citation type="journal article" date="1997" name="Nature">
        <title>The complete genome sequence of the Gram-positive bacterium Bacillus subtilis.</title>
        <authorList>
            <person name="Kunst F."/>
            <person name="Ogasawara N."/>
            <person name="Moszer I."/>
            <person name="Albertini A.M."/>
            <person name="Alloni G."/>
            <person name="Azevedo V."/>
            <person name="Bertero M.G."/>
            <person name="Bessieres P."/>
            <person name="Bolotin A."/>
            <person name="Borchert S."/>
            <person name="Borriss R."/>
            <person name="Boursier L."/>
            <person name="Brans A."/>
            <person name="Braun M."/>
            <person name="Brignell S.C."/>
            <person name="Bron S."/>
            <person name="Brouillet S."/>
            <person name="Bruschi C.V."/>
            <person name="Caldwell B."/>
            <person name="Capuano V."/>
            <person name="Carter N.M."/>
            <person name="Choi S.-K."/>
            <person name="Codani J.-J."/>
            <person name="Connerton I.F."/>
            <person name="Cummings N.J."/>
            <person name="Daniel R.A."/>
            <person name="Denizot F."/>
            <person name="Devine K.M."/>
            <person name="Duesterhoeft A."/>
            <person name="Ehrlich S.D."/>
            <person name="Emmerson P.T."/>
            <person name="Entian K.-D."/>
            <person name="Errington J."/>
            <person name="Fabret C."/>
            <person name="Ferrari E."/>
            <person name="Foulger D."/>
            <person name="Fritz C."/>
            <person name="Fujita M."/>
            <person name="Fujita Y."/>
            <person name="Fuma S."/>
            <person name="Galizzi A."/>
            <person name="Galleron N."/>
            <person name="Ghim S.-Y."/>
            <person name="Glaser P."/>
            <person name="Goffeau A."/>
            <person name="Golightly E.J."/>
            <person name="Grandi G."/>
            <person name="Guiseppi G."/>
            <person name="Guy B.J."/>
            <person name="Haga K."/>
            <person name="Haiech J."/>
            <person name="Harwood C.R."/>
            <person name="Henaut A."/>
            <person name="Hilbert H."/>
            <person name="Holsappel S."/>
            <person name="Hosono S."/>
            <person name="Hullo M.-F."/>
            <person name="Itaya M."/>
            <person name="Jones L.-M."/>
            <person name="Joris B."/>
            <person name="Karamata D."/>
            <person name="Kasahara Y."/>
            <person name="Klaerr-Blanchard M."/>
            <person name="Klein C."/>
            <person name="Kobayashi Y."/>
            <person name="Koetter P."/>
            <person name="Koningstein G."/>
            <person name="Krogh S."/>
            <person name="Kumano M."/>
            <person name="Kurita K."/>
            <person name="Lapidus A."/>
            <person name="Lardinois S."/>
            <person name="Lauber J."/>
            <person name="Lazarevic V."/>
            <person name="Lee S.-M."/>
            <person name="Levine A."/>
            <person name="Liu H."/>
            <person name="Masuda S."/>
            <person name="Mauel C."/>
            <person name="Medigue C."/>
            <person name="Medina N."/>
            <person name="Mellado R.P."/>
            <person name="Mizuno M."/>
            <person name="Moestl D."/>
            <person name="Nakai S."/>
            <person name="Noback M."/>
            <person name="Noone D."/>
            <person name="O'Reilly M."/>
            <person name="Ogawa K."/>
            <person name="Ogiwara A."/>
            <person name="Oudega B."/>
            <person name="Park S.-H."/>
            <person name="Parro V."/>
            <person name="Pohl T.M."/>
            <person name="Portetelle D."/>
            <person name="Porwollik S."/>
            <person name="Prescott A.M."/>
            <person name="Presecan E."/>
            <person name="Pujic P."/>
            <person name="Purnelle B."/>
            <person name="Rapoport G."/>
            <person name="Rey M."/>
            <person name="Reynolds S."/>
            <person name="Rieger M."/>
            <person name="Rivolta C."/>
            <person name="Rocha E."/>
            <person name="Roche B."/>
            <person name="Rose M."/>
            <person name="Sadaie Y."/>
            <person name="Sato T."/>
            <person name="Scanlan E."/>
            <person name="Schleich S."/>
            <person name="Schroeter R."/>
            <person name="Scoffone F."/>
            <person name="Sekiguchi J."/>
            <person name="Sekowska A."/>
            <person name="Seror S.J."/>
            <person name="Serror P."/>
            <person name="Shin B.-S."/>
            <person name="Soldo B."/>
            <person name="Sorokin A."/>
            <person name="Tacconi E."/>
            <person name="Takagi T."/>
            <person name="Takahashi H."/>
            <person name="Takemaru K."/>
            <person name="Takeuchi M."/>
            <person name="Tamakoshi A."/>
            <person name="Tanaka T."/>
            <person name="Terpstra P."/>
            <person name="Tognoni A."/>
            <person name="Tosato V."/>
            <person name="Uchiyama S."/>
            <person name="Vandenbol M."/>
            <person name="Vannier F."/>
            <person name="Vassarotti A."/>
            <person name="Viari A."/>
            <person name="Wambutt R."/>
            <person name="Wedler E."/>
            <person name="Wedler H."/>
            <person name="Weitzenegger T."/>
            <person name="Winters P."/>
            <person name="Wipat A."/>
            <person name="Yamamoto H."/>
            <person name="Yamane K."/>
            <person name="Yasumoto K."/>
            <person name="Yata K."/>
            <person name="Yoshida K."/>
            <person name="Yoshikawa H.-F."/>
            <person name="Zumstein E."/>
            <person name="Yoshikawa H."/>
            <person name="Danchin A."/>
        </authorList>
    </citation>
    <scope>NUCLEOTIDE SEQUENCE [LARGE SCALE GENOMIC DNA]</scope>
    <source>
        <strain>168</strain>
    </source>
</reference>
<gene>
    <name type="primary">yrrS</name>
    <name type="ordered locus">BSU27300</name>
</gene>
<dbReference type="EMBL" id="AL009126">
    <property type="protein sequence ID" value="CAB14672.1"/>
    <property type="molecule type" value="Genomic_DNA"/>
</dbReference>
<dbReference type="PIR" id="B69980">
    <property type="entry name" value="B69980"/>
</dbReference>
<dbReference type="RefSeq" id="NP_390608.1">
    <property type="nucleotide sequence ID" value="NC_000964.3"/>
</dbReference>
<dbReference type="RefSeq" id="WP_003246156.1">
    <property type="nucleotide sequence ID" value="NZ_OZ025638.1"/>
</dbReference>
<dbReference type="SMR" id="O32031"/>
<dbReference type="BioGRID" id="854294">
    <property type="interactions" value="4"/>
</dbReference>
<dbReference type="FunCoup" id="O32031">
    <property type="interactions" value="9"/>
</dbReference>
<dbReference type="STRING" id="224308.BSU27300"/>
<dbReference type="PaxDb" id="224308-BSU27300"/>
<dbReference type="DNASU" id="936614"/>
<dbReference type="EnsemblBacteria" id="CAB14672">
    <property type="protein sequence ID" value="CAB14672"/>
    <property type="gene ID" value="BSU_27300"/>
</dbReference>
<dbReference type="GeneID" id="936614"/>
<dbReference type="KEGG" id="bsu:BSU27300"/>
<dbReference type="PATRIC" id="fig|224308.179.peg.2966"/>
<dbReference type="eggNOG" id="ENOG5032DEE">
    <property type="taxonomic scope" value="Bacteria"/>
</dbReference>
<dbReference type="InParanoid" id="O32031"/>
<dbReference type="OrthoDB" id="2168558at2"/>
<dbReference type="BioCyc" id="BSUB:BSU27300-MONOMER"/>
<dbReference type="Proteomes" id="UP000001570">
    <property type="component" value="Chromosome"/>
</dbReference>
<dbReference type="GO" id="GO:0005886">
    <property type="term" value="C:plasma membrane"/>
    <property type="evidence" value="ECO:0007669"/>
    <property type="project" value="UniProtKB-SubCell"/>
</dbReference>
<dbReference type="InterPro" id="IPR009988">
    <property type="entry name" value="DUF1510"/>
</dbReference>
<dbReference type="Pfam" id="PF07423">
    <property type="entry name" value="DUF1510"/>
    <property type="match status" value="1"/>
</dbReference>
<accession>O32031</accession>
<organism>
    <name type="scientific">Bacillus subtilis (strain 168)</name>
    <dbReference type="NCBI Taxonomy" id="224308"/>
    <lineage>
        <taxon>Bacteria</taxon>
        <taxon>Bacillati</taxon>
        <taxon>Bacillota</taxon>
        <taxon>Bacilli</taxon>
        <taxon>Bacillales</taxon>
        <taxon>Bacillaceae</taxon>
        <taxon>Bacillus</taxon>
    </lineage>
</organism>
<name>YRRS_BACSU</name>
<proteinExistence type="predicted"/>